<accession>Q6HDL8</accession>
<gene>
    <name evidence="1" type="primary">ybeY</name>
    <name type="ordered locus">BT9727_4040</name>
</gene>
<reference key="1">
    <citation type="journal article" date="2006" name="J. Bacteriol.">
        <title>Pathogenomic sequence analysis of Bacillus cereus and Bacillus thuringiensis isolates closely related to Bacillus anthracis.</title>
        <authorList>
            <person name="Han C.S."/>
            <person name="Xie G."/>
            <person name="Challacombe J.F."/>
            <person name="Altherr M.R."/>
            <person name="Bhotika S.S."/>
            <person name="Bruce D."/>
            <person name="Campbell C.S."/>
            <person name="Campbell M.L."/>
            <person name="Chen J."/>
            <person name="Chertkov O."/>
            <person name="Cleland C."/>
            <person name="Dimitrijevic M."/>
            <person name="Doggett N.A."/>
            <person name="Fawcett J.J."/>
            <person name="Glavina T."/>
            <person name="Goodwin L.A."/>
            <person name="Hill K.K."/>
            <person name="Hitchcock P."/>
            <person name="Jackson P.J."/>
            <person name="Keim P."/>
            <person name="Kewalramani A.R."/>
            <person name="Longmire J."/>
            <person name="Lucas S."/>
            <person name="Malfatti S."/>
            <person name="McMurry K."/>
            <person name="Meincke L.J."/>
            <person name="Misra M."/>
            <person name="Moseman B.L."/>
            <person name="Mundt M."/>
            <person name="Munk A.C."/>
            <person name="Okinaka R.T."/>
            <person name="Parson-Quintana B."/>
            <person name="Reilly L.P."/>
            <person name="Richardson P."/>
            <person name="Robinson D.L."/>
            <person name="Rubin E."/>
            <person name="Saunders E."/>
            <person name="Tapia R."/>
            <person name="Tesmer J.G."/>
            <person name="Thayer N."/>
            <person name="Thompson L.S."/>
            <person name="Tice H."/>
            <person name="Ticknor L.O."/>
            <person name="Wills P.L."/>
            <person name="Brettin T.S."/>
            <person name="Gilna P."/>
        </authorList>
    </citation>
    <scope>NUCLEOTIDE SEQUENCE [LARGE SCALE GENOMIC DNA]</scope>
    <source>
        <strain>97-27</strain>
    </source>
</reference>
<comment type="function">
    <text evidence="1">Single strand-specific metallo-endoribonuclease involved in late-stage 70S ribosome quality control and in maturation of the 3' terminus of the 16S rRNA.</text>
</comment>
<comment type="cofactor">
    <cofactor evidence="1">
        <name>Zn(2+)</name>
        <dbReference type="ChEBI" id="CHEBI:29105"/>
    </cofactor>
    <text evidence="1">Binds 1 zinc ion.</text>
</comment>
<comment type="subcellular location">
    <subcellularLocation>
        <location evidence="1">Cytoplasm</location>
    </subcellularLocation>
</comment>
<comment type="similarity">
    <text evidence="1">Belongs to the endoribonuclease YbeY family.</text>
</comment>
<keyword id="KW-0963">Cytoplasm</keyword>
<keyword id="KW-0255">Endonuclease</keyword>
<keyword id="KW-0378">Hydrolase</keyword>
<keyword id="KW-0479">Metal-binding</keyword>
<keyword id="KW-0540">Nuclease</keyword>
<keyword id="KW-0690">Ribosome biogenesis</keyword>
<keyword id="KW-0698">rRNA processing</keyword>
<keyword id="KW-0862">Zinc</keyword>
<sequence length="156" mass="18062">MSLLIDFIDETEEVKEEYVNLIREILGKAAQMEKIEDGAELSVTFVDNERIREINRDYRDKDQPTDVISFAMEEMGEGEMEIVGVEMPRMLGDLIISIPRAKEQAEEYGHSFDRELGFLALHGFLHLLGYDHMTEEDEKEMFGRQKEILEAFGLGR</sequence>
<name>YBEY_BACHK</name>
<protein>
    <recommendedName>
        <fullName evidence="1">Endoribonuclease YbeY</fullName>
        <ecNumber evidence="1">3.1.-.-</ecNumber>
    </recommendedName>
</protein>
<feature type="chain" id="PRO_0000102408" description="Endoribonuclease YbeY">
    <location>
        <begin position="1"/>
        <end position="156"/>
    </location>
</feature>
<feature type="binding site" evidence="1">
    <location>
        <position position="122"/>
    </location>
    <ligand>
        <name>Zn(2+)</name>
        <dbReference type="ChEBI" id="CHEBI:29105"/>
        <note>catalytic</note>
    </ligand>
</feature>
<feature type="binding site" evidence="1">
    <location>
        <position position="126"/>
    </location>
    <ligand>
        <name>Zn(2+)</name>
        <dbReference type="ChEBI" id="CHEBI:29105"/>
        <note>catalytic</note>
    </ligand>
</feature>
<feature type="binding site" evidence="1">
    <location>
        <position position="132"/>
    </location>
    <ligand>
        <name>Zn(2+)</name>
        <dbReference type="ChEBI" id="CHEBI:29105"/>
        <note>catalytic</note>
    </ligand>
</feature>
<dbReference type="EC" id="3.1.-.-" evidence="1"/>
<dbReference type="EMBL" id="AE017355">
    <property type="protein sequence ID" value="AAT61033.1"/>
    <property type="molecule type" value="Genomic_DNA"/>
</dbReference>
<dbReference type="RefSeq" id="WP_000054692.1">
    <property type="nucleotide sequence ID" value="NC_005957.1"/>
</dbReference>
<dbReference type="RefSeq" id="YP_038358.1">
    <property type="nucleotide sequence ID" value="NC_005957.1"/>
</dbReference>
<dbReference type="SMR" id="Q6HDL8"/>
<dbReference type="GeneID" id="93006797"/>
<dbReference type="KEGG" id="btk:BT9727_4040"/>
<dbReference type="PATRIC" id="fig|281309.8.peg.4311"/>
<dbReference type="HOGENOM" id="CLU_106710_3_0_9"/>
<dbReference type="Proteomes" id="UP000001301">
    <property type="component" value="Chromosome"/>
</dbReference>
<dbReference type="GO" id="GO:0005737">
    <property type="term" value="C:cytoplasm"/>
    <property type="evidence" value="ECO:0007669"/>
    <property type="project" value="UniProtKB-SubCell"/>
</dbReference>
<dbReference type="GO" id="GO:0004222">
    <property type="term" value="F:metalloendopeptidase activity"/>
    <property type="evidence" value="ECO:0007669"/>
    <property type="project" value="InterPro"/>
</dbReference>
<dbReference type="GO" id="GO:0004521">
    <property type="term" value="F:RNA endonuclease activity"/>
    <property type="evidence" value="ECO:0007669"/>
    <property type="project" value="UniProtKB-UniRule"/>
</dbReference>
<dbReference type="GO" id="GO:0008270">
    <property type="term" value="F:zinc ion binding"/>
    <property type="evidence" value="ECO:0007669"/>
    <property type="project" value="UniProtKB-UniRule"/>
</dbReference>
<dbReference type="GO" id="GO:0006364">
    <property type="term" value="P:rRNA processing"/>
    <property type="evidence" value="ECO:0007669"/>
    <property type="project" value="UniProtKB-UniRule"/>
</dbReference>
<dbReference type="Gene3D" id="3.40.390.30">
    <property type="entry name" value="Metalloproteases ('zincins'), catalytic domain"/>
    <property type="match status" value="1"/>
</dbReference>
<dbReference type="HAMAP" id="MF_00009">
    <property type="entry name" value="Endoribonucl_YbeY"/>
    <property type="match status" value="1"/>
</dbReference>
<dbReference type="InterPro" id="IPR023091">
    <property type="entry name" value="MetalPrtase_cat_dom_sf_prd"/>
</dbReference>
<dbReference type="InterPro" id="IPR002036">
    <property type="entry name" value="YbeY"/>
</dbReference>
<dbReference type="InterPro" id="IPR020549">
    <property type="entry name" value="YbeY_CS"/>
</dbReference>
<dbReference type="NCBIfam" id="TIGR00043">
    <property type="entry name" value="rRNA maturation RNase YbeY"/>
    <property type="match status" value="1"/>
</dbReference>
<dbReference type="PANTHER" id="PTHR46986">
    <property type="entry name" value="ENDORIBONUCLEASE YBEY, CHLOROPLASTIC"/>
    <property type="match status" value="1"/>
</dbReference>
<dbReference type="PANTHER" id="PTHR46986:SF1">
    <property type="entry name" value="ENDORIBONUCLEASE YBEY, CHLOROPLASTIC"/>
    <property type="match status" value="1"/>
</dbReference>
<dbReference type="Pfam" id="PF02130">
    <property type="entry name" value="YbeY"/>
    <property type="match status" value="1"/>
</dbReference>
<dbReference type="SUPFAM" id="SSF55486">
    <property type="entry name" value="Metalloproteases ('zincins'), catalytic domain"/>
    <property type="match status" value="1"/>
</dbReference>
<dbReference type="PROSITE" id="PS01306">
    <property type="entry name" value="UPF0054"/>
    <property type="match status" value="1"/>
</dbReference>
<organism>
    <name type="scientific">Bacillus thuringiensis subsp. konkukian (strain 97-27)</name>
    <dbReference type="NCBI Taxonomy" id="281309"/>
    <lineage>
        <taxon>Bacteria</taxon>
        <taxon>Bacillati</taxon>
        <taxon>Bacillota</taxon>
        <taxon>Bacilli</taxon>
        <taxon>Bacillales</taxon>
        <taxon>Bacillaceae</taxon>
        <taxon>Bacillus</taxon>
        <taxon>Bacillus cereus group</taxon>
    </lineage>
</organism>
<proteinExistence type="inferred from homology"/>
<evidence type="ECO:0000255" key="1">
    <source>
        <dbReference type="HAMAP-Rule" id="MF_00009"/>
    </source>
</evidence>